<protein>
    <recommendedName>
        <fullName evidence="1">Tryptophan synthase beta chain</fullName>
        <ecNumber evidence="1">4.2.1.20</ecNumber>
    </recommendedName>
</protein>
<proteinExistence type="inferred from homology"/>
<accession>B1XBL0</accession>
<dbReference type="EC" id="4.2.1.20" evidence="1"/>
<dbReference type="EMBL" id="CP000948">
    <property type="protein sequence ID" value="ACB02480.1"/>
    <property type="molecule type" value="Genomic_DNA"/>
</dbReference>
<dbReference type="RefSeq" id="WP_000209520.1">
    <property type="nucleotide sequence ID" value="NC_010473.1"/>
</dbReference>
<dbReference type="SMR" id="B1XBL0"/>
<dbReference type="GeneID" id="75203373"/>
<dbReference type="KEGG" id="ecd:ECDH10B_1376"/>
<dbReference type="HOGENOM" id="CLU_016734_3_1_6"/>
<dbReference type="UniPathway" id="UPA00035">
    <property type="reaction ID" value="UER00044"/>
</dbReference>
<dbReference type="GO" id="GO:0005737">
    <property type="term" value="C:cytoplasm"/>
    <property type="evidence" value="ECO:0007669"/>
    <property type="project" value="TreeGrafter"/>
</dbReference>
<dbReference type="GO" id="GO:0004834">
    <property type="term" value="F:tryptophan synthase activity"/>
    <property type="evidence" value="ECO:0007669"/>
    <property type="project" value="UniProtKB-UniRule"/>
</dbReference>
<dbReference type="CDD" id="cd06446">
    <property type="entry name" value="Trp-synth_B"/>
    <property type="match status" value="1"/>
</dbReference>
<dbReference type="FunFam" id="3.40.50.1100:FF:000001">
    <property type="entry name" value="Tryptophan synthase beta chain"/>
    <property type="match status" value="1"/>
</dbReference>
<dbReference type="FunFam" id="3.40.50.1100:FF:000004">
    <property type="entry name" value="Tryptophan synthase beta chain"/>
    <property type="match status" value="1"/>
</dbReference>
<dbReference type="Gene3D" id="3.40.50.1100">
    <property type="match status" value="2"/>
</dbReference>
<dbReference type="HAMAP" id="MF_00133">
    <property type="entry name" value="Trp_synth_beta"/>
    <property type="match status" value="1"/>
</dbReference>
<dbReference type="InterPro" id="IPR006653">
    <property type="entry name" value="Trp_synth_b_CS"/>
</dbReference>
<dbReference type="InterPro" id="IPR006654">
    <property type="entry name" value="Trp_synth_beta"/>
</dbReference>
<dbReference type="InterPro" id="IPR023026">
    <property type="entry name" value="Trp_synth_beta/beta-like"/>
</dbReference>
<dbReference type="InterPro" id="IPR001926">
    <property type="entry name" value="TrpB-like_PALP"/>
</dbReference>
<dbReference type="InterPro" id="IPR036052">
    <property type="entry name" value="TrpB-like_PALP_sf"/>
</dbReference>
<dbReference type="NCBIfam" id="TIGR00263">
    <property type="entry name" value="trpB"/>
    <property type="match status" value="1"/>
</dbReference>
<dbReference type="PANTHER" id="PTHR48077:SF3">
    <property type="entry name" value="TRYPTOPHAN SYNTHASE"/>
    <property type="match status" value="1"/>
</dbReference>
<dbReference type="PANTHER" id="PTHR48077">
    <property type="entry name" value="TRYPTOPHAN SYNTHASE-RELATED"/>
    <property type="match status" value="1"/>
</dbReference>
<dbReference type="Pfam" id="PF00291">
    <property type="entry name" value="PALP"/>
    <property type="match status" value="1"/>
</dbReference>
<dbReference type="PIRSF" id="PIRSF001413">
    <property type="entry name" value="Trp_syn_beta"/>
    <property type="match status" value="1"/>
</dbReference>
<dbReference type="SUPFAM" id="SSF53686">
    <property type="entry name" value="Tryptophan synthase beta subunit-like PLP-dependent enzymes"/>
    <property type="match status" value="1"/>
</dbReference>
<dbReference type="PROSITE" id="PS00168">
    <property type="entry name" value="TRP_SYNTHASE_BETA"/>
    <property type="match status" value="1"/>
</dbReference>
<feature type="chain" id="PRO_1000095786" description="Tryptophan synthase beta chain">
    <location>
        <begin position="1"/>
        <end position="397"/>
    </location>
</feature>
<feature type="modified residue" description="N6-(pyridoxal phosphate)lysine" evidence="1">
    <location>
        <position position="87"/>
    </location>
</feature>
<keyword id="KW-0028">Amino-acid biosynthesis</keyword>
<keyword id="KW-0057">Aromatic amino acid biosynthesis</keyword>
<keyword id="KW-0456">Lyase</keyword>
<keyword id="KW-0663">Pyridoxal phosphate</keyword>
<keyword id="KW-0822">Tryptophan biosynthesis</keyword>
<gene>
    <name evidence="1" type="primary">trpB</name>
    <name type="ordered locus">ECDH10B_1376</name>
</gene>
<organism>
    <name type="scientific">Escherichia coli (strain K12 / DH10B)</name>
    <dbReference type="NCBI Taxonomy" id="316385"/>
    <lineage>
        <taxon>Bacteria</taxon>
        <taxon>Pseudomonadati</taxon>
        <taxon>Pseudomonadota</taxon>
        <taxon>Gammaproteobacteria</taxon>
        <taxon>Enterobacterales</taxon>
        <taxon>Enterobacteriaceae</taxon>
        <taxon>Escherichia</taxon>
    </lineage>
</organism>
<name>TRPB_ECODH</name>
<reference key="1">
    <citation type="journal article" date="2008" name="J. Bacteriol.">
        <title>The complete genome sequence of Escherichia coli DH10B: insights into the biology of a laboratory workhorse.</title>
        <authorList>
            <person name="Durfee T."/>
            <person name="Nelson R."/>
            <person name="Baldwin S."/>
            <person name="Plunkett G. III"/>
            <person name="Burland V."/>
            <person name="Mau B."/>
            <person name="Petrosino J.F."/>
            <person name="Qin X."/>
            <person name="Muzny D.M."/>
            <person name="Ayele M."/>
            <person name="Gibbs R.A."/>
            <person name="Csorgo B."/>
            <person name="Posfai G."/>
            <person name="Weinstock G.M."/>
            <person name="Blattner F.R."/>
        </authorList>
    </citation>
    <scope>NUCLEOTIDE SEQUENCE [LARGE SCALE GENOMIC DNA]</scope>
    <source>
        <strain>K12 / DH10B</strain>
    </source>
</reference>
<evidence type="ECO:0000255" key="1">
    <source>
        <dbReference type="HAMAP-Rule" id="MF_00133"/>
    </source>
</evidence>
<sequence length="397" mass="42983">MTTLLNPYFGEFGGMYVPQILMPALRQLEEAFVSAQKDPEFQAQFNDLLKNYAGRPTALTKCQNITAGTNTTLYLKREDLLHGGAHKTNQVLGQALLAKRMGKTEIIAETGAGQHGVASALASALLGLKCRIYMGAKDVERQSPNVFRMRLMGAEVIPVHSGSATLKDACNEALRDWSGSYETAHYMLGTAAGPHPYPTIVREFQRMIGEETKAQILEREGRLPDAVIACVGGGSNAIGMFADFINETNVGLIGVEPGGHGIETGEHGAPLKHGRVGIYFGMKAPMMQTEDGQIEESYSISAGLDFPSVGPQHAYLNSTGRADYVSITDDEALEAFKTLCLHEGIIPALESSHALAHALKMMRENPDKEQLLVVNLSGRGDKDIFTVHDILKARGEI</sequence>
<comment type="function">
    <text evidence="1">The beta subunit is responsible for the synthesis of L-tryptophan from indole and L-serine.</text>
</comment>
<comment type="catalytic activity">
    <reaction evidence="1">
        <text>(1S,2R)-1-C-(indol-3-yl)glycerol 3-phosphate + L-serine = D-glyceraldehyde 3-phosphate + L-tryptophan + H2O</text>
        <dbReference type="Rhea" id="RHEA:10532"/>
        <dbReference type="ChEBI" id="CHEBI:15377"/>
        <dbReference type="ChEBI" id="CHEBI:33384"/>
        <dbReference type="ChEBI" id="CHEBI:57912"/>
        <dbReference type="ChEBI" id="CHEBI:58866"/>
        <dbReference type="ChEBI" id="CHEBI:59776"/>
        <dbReference type="EC" id="4.2.1.20"/>
    </reaction>
</comment>
<comment type="cofactor">
    <cofactor evidence="1">
        <name>pyridoxal 5'-phosphate</name>
        <dbReference type="ChEBI" id="CHEBI:597326"/>
    </cofactor>
</comment>
<comment type="pathway">
    <text evidence="1">Amino-acid biosynthesis; L-tryptophan biosynthesis; L-tryptophan from chorismate: step 5/5.</text>
</comment>
<comment type="subunit">
    <text evidence="1">Tetramer of two alpha and two beta chains.</text>
</comment>
<comment type="similarity">
    <text evidence="1">Belongs to the TrpB family.</text>
</comment>